<comment type="function">
    <text evidence="6">Lytic polysaccharide monooxygenase (LPMO) that depolymerizes crystalline and amorphous polysaccharides via the oxidation of scissile alpha- or beta-(1-4)-glycosidic bonds, yielding C1 or C4 oxidation products (PubMed:26136828). Catalysis by LPMOs requires the reduction of the active-site copper from Cu(II) to Cu(I) by a reducing agent and H(2)O(2) or O(2) as a cosubstrate (PubMed:26136828).</text>
</comment>
<comment type="catalytic activity">
    <reaction evidence="6">
        <text>[(1-&gt;4)-beta-D-glucosyl]n+m + reduced acceptor + O2 = 4-dehydro-beta-D-glucosyl-[(1-&gt;4)-beta-D-glucosyl]n-1 + [(1-&gt;4)-beta-D-glucosyl]m + acceptor + H2O.</text>
        <dbReference type="EC" id="1.14.99.56"/>
    </reaction>
</comment>
<comment type="cofactor">
    <cofactor evidence="1">
        <name>Cu(2+)</name>
        <dbReference type="ChEBI" id="CHEBI:29036"/>
    </cofactor>
    <text evidence="1">Binds 1 copper ion per subunit.</text>
</comment>
<comment type="subcellular location">
    <subcellularLocation>
        <location evidence="9">Secreted</location>
    </subcellularLocation>
</comment>
<comment type="biotechnology">
    <text evidence="9">Lignocellulose is the most abundant polymeric composite on Earth and is a recalcitrant but promising renewable substrate for industrial biotechnology applications. Together with cellobiose dehydrogenases (CDHs) an enzymatic system capable of oxidative cellulose cleavage is formed, which increases the efficiency of cellulases and put LPMOs at focus of biofuel research.</text>
</comment>
<comment type="similarity">
    <text evidence="8">Belongs to the polysaccharide monooxygenase AA9 family.</text>
</comment>
<proteinExistence type="evidence at protein level"/>
<gene>
    <name evidence="7" type="primary">LPMO9D</name>
    <name type="ORF">PODANS_4_7570</name>
</gene>
<protein>
    <recommendedName>
        <fullName evidence="7">AA9 family lytic polysaccharide monooxygenase D</fullName>
        <shortName evidence="7">LPMO9D</shortName>
        <ecNumber evidence="6">1.14.99.56</ecNumber>
    </recommendedName>
    <alternativeName>
        <fullName evidence="8">Cellulase LPMO9D</fullName>
    </alternativeName>
    <alternativeName>
        <fullName evidence="8">Endo-beta-1,4-glucanase LPMO9D</fullName>
        <shortName evidence="8">Endoglucanase LPMO9D</shortName>
    </alternativeName>
    <alternativeName>
        <fullName evidence="8">Glycosyl hydrolase 61 family protein LPMO9D</fullName>
    </alternativeName>
</protein>
<dbReference type="EC" id="1.14.99.56" evidence="6"/>
<dbReference type="EMBL" id="CU633895">
    <property type="protein sequence ID" value="CAP66744.1"/>
    <property type="molecule type" value="Genomic_DNA"/>
</dbReference>
<dbReference type="EMBL" id="FO904939">
    <property type="protein sequence ID" value="CDP28479.1"/>
    <property type="molecule type" value="Genomic_DNA"/>
</dbReference>
<dbReference type="RefSeq" id="XP_001906078.1">
    <property type="nucleotide sequence ID" value="XM_001906043.1"/>
</dbReference>
<dbReference type="SMR" id="B2ARG6"/>
<dbReference type="STRING" id="515849.B2ARG6"/>
<dbReference type="CAZy" id="AA9">
    <property type="family name" value="Auxiliary Activities 9"/>
</dbReference>
<dbReference type="GeneID" id="6190208"/>
<dbReference type="KEGG" id="pan:PODANSg3106"/>
<dbReference type="VEuPathDB" id="FungiDB:PODANS_4_7570"/>
<dbReference type="eggNOG" id="ENOG502RY3D">
    <property type="taxonomic scope" value="Eukaryota"/>
</dbReference>
<dbReference type="HOGENOM" id="CLU_031730_1_0_1"/>
<dbReference type="OrthoDB" id="4849160at2759"/>
<dbReference type="Proteomes" id="UP000001197">
    <property type="component" value="Chromosome 4"/>
</dbReference>
<dbReference type="GO" id="GO:0005576">
    <property type="term" value="C:extracellular region"/>
    <property type="evidence" value="ECO:0007669"/>
    <property type="project" value="UniProtKB-SubCell"/>
</dbReference>
<dbReference type="GO" id="GO:0046872">
    <property type="term" value="F:metal ion binding"/>
    <property type="evidence" value="ECO:0007669"/>
    <property type="project" value="UniProtKB-KW"/>
</dbReference>
<dbReference type="GO" id="GO:0004497">
    <property type="term" value="F:monooxygenase activity"/>
    <property type="evidence" value="ECO:0007669"/>
    <property type="project" value="UniProtKB-KW"/>
</dbReference>
<dbReference type="GO" id="GO:0030245">
    <property type="term" value="P:cellulose catabolic process"/>
    <property type="evidence" value="ECO:0007669"/>
    <property type="project" value="UniProtKB-KW"/>
</dbReference>
<dbReference type="CDD" id="cd21175">
    <property type="entry name" value="LPMO_AA9"/>
    <property type="match status" value="1"/>
</dbReference>
<dbReference type="Gene3D" id="2.70.50.70">
    <property type="match status" value="1"/>
</dbReference>
<dbReference type="InterPro" id="IPR049892">
    <property type="entry name" value="AA9"/>
</dbReference>
<dbReference type="InterPro" id="IPR005103">
    <property type="entry name" value="AA9_LPMO"/>
</dbReference>
<dbReference type="PANTHER" id="PTHR33353:SF36">
    <property type="entry name" value="ENDO-BETA-1,4-GLUCANASE D"/>
    <property type="match status" value="1"/>
</dbReference>
<dbReference type="PANTHER" id="PTHR33353">
    <property type="entry name" value="PUTATIVE (AFU_ORTHOLOGUE AFUA_1G12560)-RELATED"/>
    <property type="match status" value="1"/>
</dbReference>
<dbReference type="Pfam" id="PF03443">
    <property type="entry name" value="AA9"/>
    <property type="match status" value="1"/>
</dbReference>
<evidence type="ECO:0000250" key="1">
    <source>
        <dbReference type="UniProtKB" id="Q1K8B6"/>
    </source>
</evidence>
<evidence type="ECO:0000250" key="2">
    <source>
        <dbReference type="UniProtKB" id="Q4WP32"/>
    </source>
</evidence>
<evidence type="ECO:0000255" key="3"/>
<evidence type="ECO:0000255" key="4">
    <source>
        <dbReference type="PROSITE-ProRule" id="PRU00498"/>
    </source>
</evidence>
<evidence type="ECO:0000256" key="5">
    <source>
        <dbReference type="SAM" id="MobiDB-lite"/>
    </source>
</evidence>
<evidence type="ECO:0000269" key="6">
    <source>
    </source>
</evidence>
<evidence type="ECO:0000303" key="7">
    <source>
    </source>
</evidence>
<evidence type="ECO:0000305" key="8"/>
<evidence type="ECO:0000305" key="9">
    <source>
    </source>
</evidence>
<feature type="signal peptide" evidence="3">
    <location>
        <begin position="1"/>
        <end position="21"/>
    </location>
</feature>
<feature type="chain" id="PRO_5007638780" description="AA9 family lytic polysaccharide monooxygenase D">
    <location>
        <begin position="22"/>
        <end position="345"/>
    </location>
</feature>
<feature type="region of interest" description="Disordered" evidence="5">
    <location>
        <begin position="315"/>
        <end position="345"/>
    </location>
</feature>
<feature type="compositionally biased region" description="Polar residues" evidence="5">
    <location>
        <begin position="318"/>
        <end position="327"/>
    </location>
</feature>
<feature type="compositionally biased region" description="Basic residues" evidence="5">
    <location>
        <begin position="335"/>
        <end position="345"/>
    </location>
</feature>
<feature type="binding site" evidence="1">
    <location>
        <position position="22"/>
    </location>
    <ligand>
        <name>Cu(2+)</name>
        <dbReference type="ChEBI" id="CHEBI:29036"/>
        <note>catalytic</note>
    </ligand>
</feature>
<feature type="binding site" evidence="1">
    <location>
        <position position="107"/>
    </location>
    <ligand>
        <name>Cu(2+)</name>
        <dbReference type="ChEBI" id="CHEBI:29036"/>
        <note>catalytic</note>
    </ligand>
</feature>
<feature type="binding site" evidence="1">
    <location>
        <position position="186"/>
    </location>
    <ligand>
        <name>O2</name>
        <dbReference type="ChEBI" id="CHEBI:15379"/>
    </ligand>
</feature>
<feature type="binding site" evidence="1">
    <location>
        <position position="195"/>
    </location>
    <ligand>
        <name>O2</name>
        <dbReference type="ChEBI" id="CHEBI:15379"/>
    </ligand>
</feature>
<feature type="binding site" evidence="1">
    <location>
        <position position="197"/>
    </location>
    <ligand>
        <name>Cu(2+)</name>
        <dbReference type="ChEBI" id="CHEBI:29036"/>
        <note>catalytic</note>
    </ligand>
</feature>
<feature type="glycosylation site" description="N-linked (GlcNAc...) asparagine" evidence="4">
    <location>
        <position position="160"/>
    </location>
</feature>
<feature type="disulfide bond" evidence="2">
    <location>
        <begin position="77"/>
        <end position="200"/>
    </location>
</feature>
<name>LP9D_PODAN</name>
<accession>B2ARG6</accession>
<sequence>MPSFTSKTLLAALAGAAAVNAHGHVKNVVVNGASFQGYDINSFPYTQNPPKVAAWTASNTDNGFVGPESFASSDIICHKNSANAQGRIVVAAGDSVFVQWDTWPESHHGPVIDYLASCGNTGCDKIEKTALEFFKIAEAGLVNGAQAPGRWASDVLIDNNNSWMIKIPANIRPGQYVLRHEIIALHSGGDLNGAQNYPQCFNIEVTGSGTVLPQGVKGTSLYTPTDAGIRFNIYRSLDSYPIPGPALPAGFAPVAQGSSAIVSSATAITGAATNAPAPIATTTAVNVVPSPTTIVTSVVQTSAAQTSAVQTAVPVQTSTRPISTRPQPTRCPGLGRRHLRKVARA</sequence>
<reference key="1">
    <citation type="journal article" date="2008" name="Genome Biol.">
        <title>The genome sequence of the model ascomycete fungus Podospora anserina.</title>
        <authorList>
            <person name="Espagne E."/>
            <person name="Lespinet O."/>
            <person name="Malagnac F."/>
            <person name="Da Silva C."/>
            <person name="Jaillon O."/>
            <person name="Porcel B.M."/>
            <person name="Couloux A."/>
            <person name="Aury J.-M."/>
            <person name="Segurens B."/>
            <person name="Poulain J."/>
            <person name="Anthouard V."/>
            <person name="Grossetete S."/>
            <person name="Khalili H."/>
            <person name="Coppin E."/>
            <person name="Dequard-Chablat M."/>
            <person name="Picard M."/>
            <person name="Contamine V."/>
            <person name="Arnaise S."/>
            <person name="Bourdais A."/>
            <person name="Berteaux-Lecellier V."/>
            <person name="Gautheret D."/>
            <person name="de Vries R.P."/>
            <person name="Battaglia E."/>
            <person name="Coutinho P.M."/>
            <person name="Danchin E.G.J."/>
            <person name="Henrissat B."/>
            <person name="El Khoury R."/>
            <person name="Sainsard-Chanet A."/>
            <person name="Boivin A."/>
            <person name="Pinan-Lucarre B."/>
            <person name="Sellem C.H."/>
            <person name="Debuchy R."/>
            <person name="Wincker P."/>
            <person name="Weissenbach J."/>
            <person name="Silar P."/>
        </authorList>
    </citation>
    <scope>NUCLEOTIDE SEQUENCE [LARGE SCALE GENOMIC DNA]</scope>
    <source>
        <strain>S / ATCC MYA-4624 / DSM 980 / FGSC 10383</strain>
    </source>
</reference>
<reference key="2">
    <citation type="journal article" date="2014" name="Genetics">
        <title>Maintaining two mating types: Structure of the mating type locus and its role in heterokaryosis in Podospora anserina.</title>
        <authorList>
            <person name="Grognet P."/>
            <person name="Bidard F."/>
            <person name="Kuchly C."/>
            <person name="Tong L.C.H."/>
            <person name="Coppin E."/>
            <person name="Benkhali J.A."/>
            <person name="Couloux A."/>
            <person name="Wincker P."/>
            <person name="Debuchy R."/>
            <person name="Silar P."/>
        </authorList>
    </citation>
    <scope>GENOME REANNOTATION</scope>
    <source>
        <strain>S / ATCC MYA-4624 / DSM 980 / FGSC 10383</strain>
    </source>
</reference>
<reference key="3">
    <citation type="journal article" date="2015" name="Biotechnol. Biofuels">
        <title>Substrate specificity and regioselectivity of fungal AA9 lytic polysaccharide monooxygenases secreted by Podospora anserina.</title>
        <authorList>
            <person name="Bennati-Granier C."/>
            <person name="Garajova S."/>
            <person name="Champion C."/>
            <person name="Grisel S."/>
            <person name="Haon M."/>
            <person name="Zhou S."/>
            <person name="Fanuel M."/>
            <person name="Ropartz D."/>
            <person name="Rogniaux H."/>
            <person name="Gimbert I."/>
            <person name="Record E."/>
            <person name="Berrin J.G."/>
        </authorList>
    </citation>
    <scope>FUNCTION</scope>
    <scope>CATALYTIC ACTIVITY</scope>
</reference>
<keyword id="KW-0119">Carbohydrate metabolism</keyword>
<keyword id="KW-0136">Cellulose degradation</keyword>
<keyword id="KW-0186">Copper</keyword>
<keyword id="KW-1015">Disulfide bond</keyword>
<keyword id="KW-0325">Glycoprotein</keyword>
<keyword id="KW-0479">Metal-binding</keyword>
<keyword id="KW-0503">Monooxygenase</keyword>
<keyword id="KW-0560">Oxidoreductase</keyword>
<keyword id="KW-0624">Polysaccharide degradation</keyword>
<keyword id="KW-1185">Reference proteome</keyword>
<keyword id="KW-0964">Secreted</keyword>
<keyword id="KW-0732">Signal</keyword>
<organism>
    <name type="scientific">Podospora anserina (strain S / ATCC MYA-4624 / DSM 980 / FGSC 10383)</name>
    <name type="common">Pleurage anserina</name>
    <dbReference type="NCBI Taxonomy" id="515849"/>
    <lineage>
        <taxon>Eukaryota</taxon>
        <taxon>Fungi</taxon>
        <taxon>Dikarya</taxon>
        <taxon>Ascomycota</taxon>
        <taxon>Pezizomycotina</taxon>
        <taxon>Sordariomycetes</taxon>
        <taxon>Sordariomycetidae</taxon>
        <taxon>Sordariales</taxon>
        <taxon>Podosporaceae</taxon>
        <taxon>Podospora</taxon>
        <taxon>Podospora anserina</taxon>
    </lineage>
</organism>